<evidence type="ECO:0000255" key="1">
    <source>
        <dbReference type="HAMAP-Rule" id="MF_00036"/>
    </source>
</evidence>
<feature type="chain" id="PRO_0000347517" description="Alanine--tRNA ligase">
    <location>
        <begin position="1"/>
        <end position="885"/>
    </location>
</feature>
<feature type="binding site" evidence="1">
    <location>
        <position position="564"/>
    </location>
    <ligand>
        <name>Zn(2+)</name>
        <dbReference type="ChEBI" id="CHEBI:29105"/>
    </ligand>
</feature>
<feature type="binding site" evidence="1">
    <location>
        <position position="568"/>
    </location>
    <ligand>
        <name>Zn(2+)</name>
        <dbReference type="ChEBI" id="CHEBI:29105"/>
    </ligand>
</feature>
<feature type="binding site" evidence="1">
    <location>
        <position position="676"/>
    </location>
    <ligand>
        <name>Zn(2+)</name>
        <dbReference type="ChEBI" id="CHEBI:29105"/>
    </ligand>
</feature>
<feature type="binding site" evidence="1">
    <location>
        <position position="680"/>
    </location>
    <ligand>
        <name>Zn(2+)</name>
        <dbReference type="ChEBI" id="CHEBI:29105"/>
    </ligand>
</feature>
<name>SYA_BRUSI</name>
<gene>
    <name evidence="1" type="primary">alaS</name>
    <name type="ordered locus">BSUIS_A1249</name>
</gene>
<proteinExistence type="inferred from homology"/>
<accession>B0CGZ9</accession>
<keyword id="KW-0030">Aminoacyl-tRNA synthetase</keyword>
<keyword id="KW-0067">ATP-binding</keyword>
<keyword id="KW-0963">Cytoplasm</keyword>
<keyword id="KW-0436">Ligase</keyword>
<keyword id="KW-0479">Metal-binding</keyword>
<keyword id="KW-0547">Nucleotide-binding</keyword>
<keyword id="KW-0648">Protein biosynthesis</keyword>
<keyword id="KW-0694">RNA-binding</keyword>
<keyword id="KW-0820">tRNA-binding</keyword>
<keyword id="KW-0862">Zinc</keyword>
<comment type="function">
    <text evidence="1">Catalyzes the attachment of alanine to tRNA(Ala) in a two-step reaction: alanine is first activated by ATP to form Ala-AMP and then transferred to the acceptor end of tRNA(Ala). Also edits incorrectly charged Ser-tRNA(Ala) and Gly-tRNA(Ala) via its editing domain.</text>
</comment>
<comment type="catalytic activity">
    <reaction evidence="1">
        <text>tRNA(Ala) + L-alanine + ATP = L-alanyl-tRNA(Ala) + AMP + diphosphate</text>
        <dbReference type="Rhea" id="RHEA:12540"/>
        <dbReference type="Rhea" id="RHEA-COMP:9657"/>
        <dbReference type="Rhea" id="RHEA-COMP:9923"/>
        <dbReference type="ChEBI" id="CHEBI:30616"/>
        <dbReference type="ChEBI" id="CHEBI:33019"/>
        <dbReference type="ChEBI" id="CHEBI:57972"/>
        <dbReference type="ChEBI" id="CHEBI:78442"/>
        <dbReference type="ChEBI" id="CHEBI:78497"/>
        <dbReference type="ChEBI" id="CHEBI:456215"/>
        <dbReference type="EC" id="6.1.1.7"/>
    </reaction>
</comment>
<comment type="cofactor">
    <cofactor evidence="1">
        <name>Zn(2+)</name>
        <dbReference type="ChEBI" id="CHEBI:29105"/>
    </cofactor>
    <text evidence="1">Binds 1 zinc ion per subunit.</text>
</comment>
<comment type="subcellular location">
    <subcellularLocation>
        <location evidence="1">Cytoplasm</location>
    </subcellularLocation>
</comment>
<comment type="domain">
    <text evidence="1">Consists of three domains; the N-terminal catalytic domain, the editing domain and the C-terminal C-Ala domain. The editing domain removes incorrectly charged amino acids, while the C-Ala domain, along with tRNA(Ala), serves as a bridge to cooperatively bring together the editing and aminoacylation centers thus stimulating deacylation of misacylated tRNAs.</text>
</comment>
<comment type="similarity">
    <text evidence="1">Belongs to the class-II aminoacyl-tRNA synthetase family.</text>
</comment>
<organism>
    <name type="scientific">Brucella suis (strain ATCC 23445 / NCTC 10510)</name>
    <dbReference type="NCBI Taxonomy" id="470137"/>
    <lineage>
        <taxon>Bacteria</taxon>
        <taxon>Pseudomonadati</taxon>
        <taxon>Pseudomonadota</taxon>
        <taxon>Alphaproteobacteria</taxon>
        <taxon>Hyphomicrobiales</taxon>
        <taxon>Brucellaceae</taxon>
        <taxon>Brucella/Ochrobactrum group</taxon>
        <taxon>Brucella</taxon>
    </lineage>
</organism>
<dbReference type="EC" id="6.1.1.7" evidence="1"/>
<dbReference type="EMBL" id="CP000911">
    <property type="protein sequence ID" value="ABY38300.1"/>
    <property type="molecule type" value="Genomic_DNA"/>
</dbReference>
<dbReference type="RefSeq" id="WP_002964330.1">
    <property type="nucleotide sequence ID" value="NC_010169.1"/>
</dbReference>
<dbReference type="SMR" id="B0CGZ9"/>
<dbReference type="GeneID" id="97533555"/>
<dbReference type="KEGG" id="bmt:BSUIS_A1249"/>
<dbReference type="HOGENOM" id="CLU_004485_1_1_5"/>
<dbReference type="Proteomes" id="UP000008545">
    <property type="component" value="Chromosome I"/>
</dbReference>
<dbReference type="GO" id="GO:0005829">
    <property type="term" value="C:cytosol"/>
    <property type="evidence" value="ECO:0007669"/>
    <property type="project" value="TreeGrafter"/>
</dbReference>
<dbReference type="GO" id="GO:0004813">
    <property type="term" value="F:alanine-tRNA ligase activity"/>
    <property type="evidence" value="ECO:0007669"/>
    <property type="project" value="UniProtKB-UniRule"/>
</dbReference>
<dbReference type="GO" id="GO:0002161">
    <property type="term" value="F:aminoacyl-tRNA deacylase activity"/>
    <property type="evidence" value="ECO:0007669"/>
    <property type="project" value="TreeGrafter"/>
</dbReference>
<dbReference type="GO" id="GO:0005524">
    <property type="term" value="F:ATP binding"/>
    <property type="evidence" value="ECO:0007669"/>
    <property type="project" value="UniProtKB-UniRule"/>
</dbReference>
<dbReference type="GO" id="GO:0000049">
    <property type="term" value="F:tRNA binding"/>
    <property type="evidence" value="ECO:0007669"/>
    <property type="project" value="UniProtKB-KW"/>
</dbReference>
<dbReference type="GO" id="GO:0008270">
    <property type="term" value="F:zinc ion binding"/>
    <property type="evidence" value="ECO:0007669"/>
    <property type="project" value="UniProtKB-UniRule"/>
</dbReference>
<dbReference type="GO" id="GO:0006419">
    <property type="term" value="P:alanyl-tRNA aminoacylation"/>
    <property type="evidence" value="ECO:0007669"/>
    <property type="project" value="UniProtKB-UniRule"/>
</dbReference>
<dbReference type="GO" id="GO:0045892">
    <property type="term" value="P:negative regulation of DNA-templated transcription"/>
    <property type="evidence" value="ECO:0007669"/>
    <property type="project" value="TreeGrafter"/>
</dbReference>
<dbReference type="CDD" id="cd00673">
    <property type="entry name" value="AlaRS_core"/>
    <property type="match status" value="1"/>
</dbReference>
<dbReference type="FunFam" id="2.40.30.130:FF:000001">
    <property type="entry name" value="Alanine--tRNA ligase"/>
    <property type="match status" value="1"/>
</dbReference>
<dbReference type="FunFam" id="3.10.310.40:FF:000001">
    <property type="entry name" value="Alanine--tRNA ligase"/>
    <property type="match status" value="1"/>
</dbReference>
<dbReference type="FunFam" id="3.30.54.20:FF:000001">
    <property type="entry name" value="Alanine--tRNA ligase"/>
    <property type="match status" value="1"/>
</dbReference>
<dbReference type="FunFam" id="3.30.930.10:FF:000004">
    <property type="entry name" value="Alanine--tRNA ligase"/>
    <property type="match status" value="1"/>
</dbReference>
<dbReference type="FunFam" id="3.30.980.10:FF:000004">
    <property type="entry name" value="Alanine--tRNA ligase, cytoplasmic"/>
    <property type="match status" value="1"/>
</dbReference>
<dbReference type="Gene3D" id="2.40.30.130">
    <property type="match status" value="1"/>
</dbReference>
<dbReference type="Gene3D" id="3.10.310.40">
    <property type="match status" value="1"/>
</dbReference>
<dbReference type="Gene3D" id="3.30.54.20">
    <property type="match status" value="1"/>
</dbReference>
<dbReference type="Gene3D" id="6.10.250.550">
    <property type="match status" value="1"/>
</dbReference>
<dbReference type="Gene3D" id="3.30.930.10">
    <property type="entry name" value="Bira Bifunctional Protein, Domain 2"/>
    <property type="match status" value="1"/>
</dbReference>
<dbReference type="Gene3D" id="3.30.980.10">
    <property type="entry name" value="Threonyl-trna Synthetase, Chain A, domain 2"/>
    <property type="match status" value="1"/>
</dbReference>
<dbReference type="HAMAP" id="MF_00036_B">
    <property type="entry name" value="Ala_tRNA_synth_B"/>
    <property type="match status" value="1"/>
</dbReference>
<dbReference type="InterPro" id="IPR045864">
    <property type="entry name" value="aa-tRNA-synth_II/BPL/LPL"/>
</dbReference>
<dbReference type="InterPro" id="IPR002318">
    <property type="entry name" value="Ala-tRNA-lgiase_IIc"/>
</dbReference>
<dbReference type="InterPro" id="IPR018162">
    <property type="entry name" value="Ala-tRNA-ligase_IIc_anticod-bd"/>
</dbReference>
<dbReference type="InterPro" id="IPR018165">
    <property type="entry name" value="Ala-tRNA-synth_IIc_core"/>
</dbReference>
<dbReference type="InterPro" id="IPR018164">
    <property type="entry name" value="Ala-tRNA-synth_IIc_N"/>
</dbReference>
<dbReference type="InterPro" id="IPR050058">
    <property type="entry name" value="Ala-tRNA_ligase"/>
</dbReference>
<dbReference type="InterPro" id="IPR023033">
    <property type="entry name" value="Ala_tRNA_ligase_euk/bac"/>
</dbReference>
<dbReference type="InterPro" id="IPR003156">
    <property type="entry name" value="DHHA1_dom"/>
</dbReference>
<dbReference type="InterPro" id="IPR018163">
    <property type="entry name" value="Thr/Ala-tRNA-synth_IIc_edit"/>
</dbReference>
<dbReference type="InterPro" id="IPR009000">
    <property type="entry name" value="Transl_B-barrel_sf"/>
</dbReference>
<dbReference type="InterPro" id="IPR012947">
    <property type="entry name" value="tRNA_SAD"/>
</dbReference>
<dbReference type="NCBIfam" id="TIGR00344">
    <property type="entry name" value="alaS"/>
    <property type="match status" value="1"/>
</dbReference>
<dbReference type="PANTHER" id="PTHR11777:SF9">
    <property type="entry name" value="ALANINE--TRNA LIGASE, CYTOPLASMIC"/>
    <property type="match status" value="1"/>
</dbReference>
<dbReference type="PANTHER" id="PTHR11777">
    <property type="entry name" value="ALANYL-TRNA SYNTHETASE"/>
    <property type="match status" value="1"/>
</dbReference>
<dbReference type="Pfam" id="PF02272">
    <property type="entry name" value="DHHA1"/>
    <property type="match status" value="1"/>
</dbReference>
<dbReference type="Pfam" id="PF01411">
    <property type="entry name" value="tRNA-synt_2c"/>
    <property type="match status" value="1"/>
</dbReference>
<dbReference type="Pfam" id="PF07973">
    <property type="entry name" value="tRNA_SAD"/>
    <property type="match status" value="1"/>
</dbReference>
<dbReference type="PRINTS" id="PR00980">
    <property type="entry name" value="TRNASYNTHALA"/>
</dbReference>
<dbReference type="SMART" id="SM00863">
    <property type="entry name" value="tRNA_SAD"/>
    <property type="match status" value="1"/>
</dbReference>
<dbReference type="SUPFAM" id="SSF55681">
    <property type="entry name" value="Class II aaRS and biotin synthetases"/>
    <property type="match status" value="1"/>
</dbReference>
<dbReference type="SUPFAM" id="SSF101353">
    <property type="entry name" value="Putative anticodon-binding domain of alanyl-tRNA synthetase (AlaRS)"/>
    <property type="match status" value="1"/>
</dbReference>
<dbReference type="SUPFAM" id="SSF55186">
    <property type="entry name" value="ThrRS/AlaRS common domain"/>
    <property type="match status" value="1"/>
</dbReference>
<dbReference type="SUPFAM" id="SSF50447">
    <property type="entry name" value="Translation proteins"/>
    <property type="match status" value="1"/>
</dbReference>
<dbReference type="PROSITE" id="PS50860">
    <property type="entry name" value="AA_TRNA_LIGASE_II_ALA"/>
    <property type="match status" value="1"/>
</dbReference>
<protein>
    <recommendedName>
        <fullName evidence="1">Alanine--tRNA ligase</fullName>
        <ecNumber evidence="1">6.1.1.7</ecNumber>
    </recommendedName>
    <alternativeName>
        <fullName evidence="1">Alanyl-tRNA synthetase</fullName>
        <shortName evidence="1">AlaRS</shortName>
    </alternativeName>
</protein>
<sequence length="885" mass="95586">MAGVNEIRSTFLDYFRKNGHEVVPSSPLVPRNDPTLMFTNAGMVQFKNVFTGLEHRSYNRATTSQKCVRAGGKHNDLDNVGYTARHHTFFEMLGNFSFGDYFKEDAISFAWNLITREFGLPKDKLLVTVYHTDDDAANFWKKIAGLSDDRIIRIPTSDNFWAMGDTGPCGPCSEIFYDHGDHIWGGPPGSPEEDGDRFIEIWNLVFMQFEQQTPELRIDLPRPSIDTGMGLERIAAVLQGVHDNYDIDLFKALIRASEEATGVKAEGDFRASHRVIADHLRASSFLIADGVLPSNEGRGYVLRRIMRRAMRHAQLLGAKEPLMWRLLPALIREMGQAYPELIRAESLISETLKLEETRFRKTLERGLGLLSDASENLAEGDRLDGETAFKLYDTYGFPLDLTQDALRQRGIAVDTEGFNVAMERQKAEARANWTGSGEAATETIWFGIKDKVGATEFLGYETESAEGVIASLVRDGVEVPSVREGETISVVVNQTPFYGESGGQQGDTGTISGEGFVIAVKDTQKKGEGVFVHIGEVTEGTAKAGDVVELKVDSARRTRIRSNHSATHLLHEALRETLGTHVAQKGSLVAPDRLRFDFSHPKPISAEELEAVENLANEIILQNAPVTTRLMAVDDAIAEGAMALFGEKYGDEVRVVSMGTAKHGSKAGKAYSVELCGGTHVRQTGDIGLVRIISEGGVAAGVRRLEALTGEAARLYLEEQDERVKAIASALKTTSADVLDRVNALIDERKKLERELADARKKLALGGGSSDGGSAVEAVNGVNFLGKIVTGVSPRDLKPLADEGKKQVGSGVVLFIGVGEDGKASAVAAVTEDMVGRFSAVDLVRAASAALGGAGGGGRPDMAQAGGPDGAKAADAIAAVKALIA</sequence>
<reference key="1">
    <citation type="submission" date="2007-12" db="EMBL/GenBank/DDBJ databases">
        <title>Brucella suis ATCC 23445 whole genome shotgun sequencing project.</title>
        <authorList>
            <person name="Setubal J.C."/>
            <person name="Bowns C."/>
            <person name="Boyle S."/>
            <person name="Crasta O.R."/>
            <person name="Czar M.J."/>
            <person name="Dharmanolla C."/>
            <person name="Gillespie J.J."/>
            <person name="Kenyon R.W."/>
            <person name="Lu J."/>
            <person name="Mane S."/>
            <person name="Mohapatra S."/>
            <person name="Nagrani S."/>
            <person name="Purkayastha A."/>
            <person name="Rajasimha H.K."/>
            <person name="Shallom J.M."/>
            <person name="Shallom S."/>
            <person name="Shukla M."/>
            <person name="Snyder E.E."/>
            <person name="Sobral B.W."/>
            <person name="Wattam A.R."/>
            <person name="Will R."/>
            <person name="Williams K."/>
            <person name="Yoo H."/>
            <person name="Bruce D."/>
            <person name="Detter C."/>
            <person name="Munk C."/>
            <person name="Brettin T.S."/>
        </authorList>
    </citation>
    <scope>NUCLEOTIDE SEQUENCE [LARGE SCALE GENOMIC DNA]</scope>
    <source>
        <strain>ATCC 23445 / NCTC 10510</strain>
    </source>
</reference>